<name>VDAC3_BOVIN</name>
<dbReference type="EMBL" id="AF268466">
    <property type="protein sequence ID" value="AAF80103.1"/>
    <property type="molecule type" value="mRNA"/>
</dbReference>
<dbReference type="RefSeq" id="NP_777154.1">
    <property type="nucleotide sequence ID" value="NM_174729.2"/>
</dbReference>
<dbReference type="RefSeq" id="XP_005226158.1">
    <property type="nucleotide sequence ID" value="XM_005226101.2"/>
</dbReference>
<dbReference type="SMR" id="Q9MZ13"/>
<dbReference type="FunCoup" id="Q9MZ13">
    <property type="interactions" value="2553"/>
</dbReference>
<dbReference type="STRING" id="9913.ENSBTAP00000044243"/>
<dbReference type="PaxDb" id="9913-ENSBTAP00000044243"/>
<dbReference type="GeneID" id="282716"/>
<dbReference type="KEGG" id="bta:282716"/>
<dbReference type="CTD" id="7419"/>
<dbReference type="eggNOG" id="KOG3126">
    <property type="taxonomic scope" value="Eukaryota"/>
</dbReference>
<dbReference type="HOGENOM" id="CLU_044399_2_0_1"/>
<dbReference type="InParanoid" id="Q9MZ13"/>
<dbReference type="OrthoDB" id="7827681at2759"/>
<dbReference type="Proteomes" id="UP000009136">
    <property type="component" value="Unplaced"/>
</dbReference>
<dbReference type="GO" id="GO:0016020">
    <property type="term" value="C:membrane"/>
    <property type="evidence" value="ECO:0000250"/>
    <property type="project" value="UniProtKB"/>
</dbReference>
<dbReference type="GO" id="GO:0005741">
    <property type="term" value="C:mitochondrial outer membrane"/>
    <property type="evidence" value="ECO:0000318"/>
    <property type="project" value="GO_Central"/>
</dbReference>
<dbReference type="GO" id="GO:0046930">
    <property type="term" value="C:pore complex"/>
    <property type="evidence" value="ECO:0007669"/>
    <property type="project" value="UniProtKB-KW"/>
</dbReference>
<dbReference type="GO" id="GO:0000166">
    <property type="term" value="F:nucleotide binding"/>
    <property type="evidence" value="ECO:0007669"/>
    <property type="project" value="UniProtKB-KW"/>
</dbReference>
<dbReference type="GO" id="GO:0015288">
    <property type="term" value="F:porin activity"/>
    <property type="evidence" value="ECO:0007669"/>
    <property type="project" value="UniProtKB-KW"/>
</dbReference>
<dbReference type="GO" id="GO:0008308">
    <property type="term" value="F:voltage-gated monoatomic anion channel activity"/>
    <property type="evidence" value="ECO:0000318"/>
    <property type="project" value="GO_Central"/>
</dbReference>
<dbReference type="GO" id="GO:0120317">
    <property type="term" value="P:sperm mitochondrial sheath assembly"/>
    <property type="evidence" value="ECO:0000250"/>
    <property type="project" value="UniProtKB"/>
</dbReference>
<dbReference type="GO" id="GO:0007283">
    <property type="term" value="P:spermatogenesis"/>
    <property type="evidence" value="ECO:0000250"/>
    <property type="project" value="UniProtKB"/>
</dbReference>
<dbReference type="CDD" id="cd07306">
    <property type="entry name" value="Porin3_VDAC"/>
    <property type="match status" value="1"/>
</dbReference>
<dbReference type="FunFam" id="2.40.160.10:FF:000001">
    <property type="entry name" value="Voltage-dependent anion-selective channel protein 2"/>
    <property type="match status" value="1"/>
</dbReference>
<dbReference type="Gene3D" id="2.40.160.10">
    <property type="entry name" value="Porin"/>
    <property type="match status" value="1"/>
</dbReference>
<dbReference type="InterPro" id="IPR023614">
    <property type="entry name" value="Porin_dom_sf"/>
</dbReference>
<dbReference type="InterPro" id="IPR001925">
    <property type="entry name" value="Porin_Euk"/>
</dbReference>
<dbReference type="InterPro" id="IPR027246">
    <property type="entry name" value="Porin_Euk/Tom40"/>
</dbReference>
<dbReference type="PANTHER" id="PTHR11743">
    <property type="entry name" value="VOLTAGE-DEPENDENT ANION-SELECTIVE CHANNEL"/>
    <property type="match status" value="1"/>
</dbReference>
<dbReference type="PANTHER" id="PTHR11743:SF28">
    <property type="entry name" value="VOLTAGE-DEPENDENT ANION-SELECTIVE CHANNEL PROTEIN 3"/>
    <property type="match status" value="1"/>
</dbReference>
<dbReference type="Pfam" id="PF01459">
    <property type="entry name" value="Porin_3"/>
    <property type="match status" value="1"/>
</dbReference>
<dbReference type="PRINTS" id="PR00185">
    <property type="entry name" value="EUKARYTPORIN"/>
</dbReference>
<dbReference type="PROSITE" id="PS00558">
    <property type="entry name" value="EUKARYOTIC_PORIN"/>
    <property type="match status" value="1"/>
</dbReference>
<organism>
    <name type="scientific">Bos taurus</name>
    <name type="common">Bovine</name>
    <dbReference type="NCBI Taxonomy" id="9913"/>
    <lineage>
        <taxon>Eukaryota</taxon>
        <taxon>Metazoa</taxon>
        <taxon>Chordata</taxon>
        <taxon>Craniata</taxon>
        <taxon>Vertebrata</taxon>
        <taxon>Euteleostomi</taxon>
        <taxon>Mammalia</taxon>
        <taxon>Eutheria</taxon>
        <taxon>Laurasiatheria</taxon>
        <taxon>Artiodactyla</taxon>
        <taxon>Ruminantia</taxon>
        <taxon>Pecora</taxon>
        <taxon>Bovidae</taxon>
        <taxon>Bovinae</taxon>
        <taxon>Bos</taxon>
    </lineage>
</organism>
<accession>Q9MZ13</accession>
<protein>
    <recommendedName>
        <fullName evidence="4">Non-selective voltage-gated ion channel VDAC3</fullName>
        <shortName>VDAC-3</shortName>
    </recommendedName>
    <alternativeName>
        <fullName>Outer mitochondrial membrane protein porin 3</fullName>
    </alternativeName>
</protein>
<feature type="initiator methionine" description="Removed" evidence="4">
    <location>
        <position position="1"/>
    </location>
</feature>
<feature type="chain" id="PRO_0000050511" description="Non-selective voltage-gated ion channel VDAC3">
    <location>
        <begin position="2"/>
        <end position="283"/>
    </location>
</feature>
<feature type="transmembrane region" description="Beta stranded" evidence="1">
    <location>
        <begin position="26"/>
        <end position="35"/>
    </location>
</feature>
<feature type="transmembrane region" description="Beta stranded" evidence="1">
    <location>
        <begin position="39"/>
        <end position="47"/>
    </location>
</feature>
<feature type="transmembrane region" description="Beta stranded" evidence="1">
    <location>
        <begin position="54"/>
        <end position="64"/>
    </location>
</feature>
<feature type="transmembrane region" description="Beta stranded" evidence="1">
    <location>
        <begin position="69"/>
        <end position="76"/>
    </location>
</feature>
<feature type="transmembrane region" description="Beta stranded" evidence="1">
    <location>
        <begin position="80"/>
        <end position="89"/>
    </location>
</feature>
<feature type="transmembrane region" description="Beta stranded" evidence="1">
    <location>
        <begin position="95"/>
        <end position="104"/>
    </location>
</feature>
<feature type="transmembrane region" description="Beta stranded" evidence="1">
    <location>
        <begin position="111"/>
        <end position="120"/>
    </location>
</feature>
<feature type="transmembrane region" description="Beta stranded" evidence="1">
    <location>
        <begin position="123"/>
        <end position="130"/>
    </location>
</feature>
<feature type="transmembrane region" description="Beta stranded" evidence="1">
    <location>
        <begin position="137"/>
        <end position="145"/>
    </location>
</feature>
<feature type="transmembrane region" description="Beta stranded" evidence="1">
    <location>
        <begin position="150"/>
        <end position="158"/>
    </location>
</feature>
<feature type="transmembrane region" description="Beta stranded" evidence="1">
    <location>
        <begin position="163"/>
        <end position="175"/>
    </location>
</feature>
<feature type="transmembrane region" description="Beta stranded" evidence="1">
    <location>
        <begin position="178"/>
        <end position="185"/>
    </location>
</feature>
<feature type="transmembrane region" description="Beta stranded" evidence="1">
    <location>
        <begin position="189"/>
        <end position="198"/>
    </location>
</feature>
<feature type="transmembrane region" description="Beta stranded" evidence="1">
    <location>
        <begin position="202"/>
        <end position="211"/>
    </location>
</feature>
<feature type="transmembrane region" description="Beta stranded" evidence="1">
    <location>
        <begin position="218"/>
        <end position="227"/>
    </location>
</feature>
<feature type="transmembrane region" description="Beta stranded" evidence="1">
    <location>
        <begin position="231"/>
        <end position="238"/>
    </location>
</feature>
<feature type="transmembrane region" description="Beta stranded" evidence="1">
    <location>
        <begin position="242"/>
        <end position="251"/>
    </location>
</feature>
<feature type="transmembrane region" description="Beta stranded" evidence="1">
    <location>
        <begin position="254"/>
        <end position="263"/>
    </location>
</feature>
<feature type="transmembrane region" description="Beta stranded" evidence="1">
    <location>
        <begin position="273"/>
        <end position="282"/>
    </location>
</feature>
<feature type="binding site" evidence="1">
    <location>
        <begin position="242"/>
        <end position="244"/>
    </location>
    <ligand>
        <name>NAD(+)</name>
        <dbReference type="ChEBI" id="CHEBI:57540"/>
    </ligand>
</feature>
<feature type="binding site" evidence="1">
    <location>
        <begin position="260"/>
        <end position="264"/>
    </location>
    <ligand>
        <name>NAD(+)</name>
        <dbReference type="ChEBI" id="CHEBI:57540"/>
    </ligand>
</feature>
<feature type="modified residue" description="N-acetylcysteine" evidence="4">
    <location>
        <position position="2"/>
    </location>
</feature>
<feature type="modified residue" description="Phosphothreonine" evidence="4">
    <location>
        <position position="4"/>
    </location>
</feature>
<feature type="modified residue" description="N6-acetyllysine" evidence="2">
    <location>
        <position position="12"/>
    </location>
</feature>
<feature type="modified residue" description="N6-acetyllysine" evidence="2">
    <location>
        <position position="15"/>
    </location>
</feature>
<feature type="modified residue" description="N6-acetyllysine" evidence="4">
    <location>
        <position position="20"/>
    </location>
</feature>
<feature type="modified residue" description="N6-acetyllysine" evidence="4">
    <location>
        <position position="90"/>
    </location>
</feature>
<feature type="modified residue" description="Phosphoserine" evidence="3">
    <location>
        <position position="241"/>
    </location>
</feature>
<feature type="modified residue" description="N6-acetyllysine; alternate" evidence="2">
    <location>
        <position position="266"/>
    </location>
</feature>
<feature type="cross-link" description="Glycyl lysine isopeptide (Lys-Gly) (interchain with G-Cter in ubiquitin)" evidence="4">
    <location>
        <position position="53"/>
    </location>
</feature>
<feature type="cross-link" description="Glycyl lysine isopeptide (Lys-Gly) (interchain with G-Cter in ubiquitin)" evidence="4">
    <location>
        <position position="109"/>
    </location>
</feature>
<feature type="cross-link" description="Glycyl lysine isopeptide (Lys-Gly) (interchain with G-Cter in ubiquitin)" evidence="4">
    <location>
        <position position="110"/>
    </location>
</feature>
<feature type="cross-link" description="Glycyl lysine isopeptide (Lys-Gly) (interchain with G-Cter in ubiquitin); alternate" evidence="4">
    <location>
        <position position="266"/>
    </location>
</feature>
<keyword id="KW-0007">Acetylation</keyword>
<keyword id="KW-0406">Ion transport</keyword>
<keyword id="KW-1017">Isopeptide bond</keyword>
<keyword id="KW-0472">Membrane</keyword>
<keyword id="KW-0496">Mitochondrion</keyword>
<keyword id="KW-1000">Mitochondrion outer membrane</keyword>
<keyword id="KW-0520">NAD</keyword>
<keyword id="KW-0547">Nucleotide-binding</keyword>
<keyword id="KW-0597">Phosphoprotein</keyword>
<keyword id="KW-0626">Porin</keyword>
<keyword id="KW-1185">Reference proteome</keyword>
<keyword id="KW-0812">Transmembrane</keyword>
<keyword id="KW-1134">Transmembrane beta strand</keyword>
<keyword id="KW-0813">Transport</keyword>
<keyword id="KW-0832">Ubl conjugation</keyword>
<comment type="function">
    <text evidence="2 4">Non-selective voltage-gated ion channel that mediates the transport of anions and cations through the mitochondrion outer membrane and plasma membrane. Forms a high-conducting channel with a stable open state and a voltage-induced closure with a mild preference for anions over cations (By similarity). Involved in male fertility and sperm mitochondrial sheath formation (By similarity).</text>
</comment>
<comment type="catalytic activity">
    <reaction evidence="4">
        <text>chloride(in) = chloride(out)</text>
        <dbReference type="Rhea" id="RHEA:29823"/>
        <dbReference type="ChEBI" id="CHEBI:17996"/>
    </reaction>
</comment>
<comment type="catalytic activity">
    <reaction evidence="4">
        <text>K(+)(in) = K(+)(out)</text>
        <dbReference type="Rhea" id="RHEA:29463"/>
        <dbReference type="ChEBI" id="CHEBI:29103"/>
    </reaction>
</comment>
<comment type="subunit">
    <text evidence="2">Interacts with ARMC12 in a TBC1D21-dependent manner. Interacts with MISFA.</text>
</comment>
<comment type="subcellular location">
    <subcellularLocation>
        <location evidence="1">Mitochondrion outer membrane</location>
    </subcellularLocation>
    <subcellularLocation>
        <location evidence="4">Membrane</location>
    </subcellularLocation>
    <text evidence="4">May localize to non-mitochondrial membranes.</text>
</comment>
<comment type="domain">
    <text evidence="1">Consists mainly of a membrane-spanning beta-barrel formed by 19 beta-strands.</text>
</comment>
<comment type="PTM">
    <text evidence="4">Ubiquitinated by PRKN during mitophagy, leading to its degradation and enhancement of mitophagy. Deubiquitinated by USP30.</text>
</comment>
<comment type="similarity">
    <text evidence="5">Belongs to the eukaryotic mitochondrial porin family.</text>
</comment>
<gene>
    <name evidence="4" type="primary">VDAC3</name>
</gene>
<reference key="1">
    <citation type="submission" date="2000-05" db="EMBL/GenBank/DDBJ databases">
        <title>Ion channels in the lens.</title>
        <authorList>
            <person name="Rae J.L."/>
        </authorList>
    </citation>
    <scope>NUCLEOTIDE SEQUENCE [MRNA]</scope>
    <source>
        <tissue>Lens</tissue>
    </source>
</reference>
<proteinExistence type="evidence at transcript level"/>
<sequence length="283" mass="30739">MCNTPTYCDLGKAAKDVFNKGYGFGMVKIDLRTKSCSGVEFSTSGHAYTDTGKASGNLETKYKICNYGLTFTQKWNTDNTLGTEISWENKLAEGLKLTLDTIFVPNTGKKSGKLKASYKRDCFSLGSNVDIDFSGPTIYGWAVLAFEGWLAGYQMSFDTAKSKLSQNNFALGYKAADFQLHTHVNDGTEFGGSIYQKVNEKIETSINLAWTAGSNNTRFGIAAKYKLDCRTSLSAKVNNASLIGLGYTQTLRPGVKLTLSALIDGKNFNAGGHKVGLGFELEA</sequence>
<evidence type="ECO:0000250" key="1">
    <source>
        <dbReference type="UniProtKB" id="P21796"/>
    </source>
</evidence>
<evidence type="ECO:0000250" key="2">
    <source>
        <dbReference type="UniProtKB" id="Q60931"/>
    </source>
</evidence>
<evidence type="ECO:0000250" key="3">
    <source>
        <dbReference type="UniProtKB" id="Q9R1Z0"/>
    </source>
</evidence>
<evidence type="ECO:0000250" key="4">
    <source>
        <dbReference type="UniProtKB" id="Q9Y277"/>
    </source>
</evidence>
<evidence type="ECO:0000305" key="5"/>